<reference key="1">
    <citation type="journal article" date="2007" name="Genome Biol.">
        <title>Comparison of Francisella tularensis genomes reveals evolutionary events associated with the emergence of human pathogenic strains.</title>
        <authorList>
            <person name="Rohmer L."/>
            <person name="Fong C."/>
            <person name="Abmayr S."/>
            <person name="Wasnick M."/>
            <person name="Larson Freeman T.J."/>
            <person name="Radey M."/>
            <person name="Guina T."/>
            <person name="Svensson K."/>
            <person name="Hayden H.S."/>
            <person name="Jacobs M."/>
            <person name="Gallagher L.A."/>
            <person name="Manoil C."/>
            <person name="Ernst R.K."/>
            <person name="Drees B."/>
            <person name="Buckley D."/>
            <person name="Haugen E."/>
            <person name="Bovee D."/>
            <person name="Zhou Y."/>
            <person name="Chang J."/>
            <person name="Levy R."/>
            <person name="Lim R."/>
            <person name="Gillett W."/>
            <person name="Guenthener D."/>
            <person name="Kang A."/>
            <person name="Shaffer S.A."/>
            <person name="Taylor G."/>
            <person name="Chen J."/>
            <person name="Gallis B."/>
            <person name="D'Argenio D.A."/>
            <person name="Forsman M."/>
            <person name="Olson M.V."/>
            <person name="Goodlett D.R."/>
            <person name="Kaul R."/>
            <person name="Miller S.I."/>
            <person name="Brittnacher M.J."/>
        </authorList>
    </citation>
    <scope>NUCLEOTIDE SEQUENCE [LARGE SCALE GENOMIC DNA]</scope>
    <source>
        <strain>U112</strain>
    </source>
</reference>
<comment type="function">
    <text evidence="1">Binds to 23S rRNA. Forms part of two intersubunit bridges in the 70S ribosome.</text>
</comment>
<comment type="subunit">
    <text evidence="1">Part of the 50S ribosomal subunit. Forms a cluster with proteins L3 and L19. In the 70S ribosome, L14 and L19 interact and together make contacts with the 16S rRNA in bridges B5 and B8.</text>
</comment>
<comment type="similarity">
    <text evidence="1">Belongs to the universal ribosomal protein uL14 family.</text>
</comment>
<organism>
    <name type="scientific">Francisella tularensis subsp. novicida (strain U112)</name>
    <dbReference type="NCBI Taxonomy" id="401614"/>
    <lineage>
        <taxon>Bacteria</taxon>
        <taxon>Pseudomonadati</taxon>
        <taxon>Pseudomonadota</taxon>
        <taxon>Gammaproteobacteria</taxon>
        <taxon>Thiotrichales</taxon>
        <taxon>Francisellaceae</taxon>
        <taxon>Francisella</taxon>
    </lineage>
</organism>
<feature type="chain" id="PRO_1000055584" description="Large ribosomal subunit protein uL14">
    <location>
        <begin position="1"/>
        <end position="122"/>
    </location>
</feature>
<gene>
    <name evidence="1" type="primary">rplN</name>
    <name type="ordered locus">FTN_0249</name>
</gene>
<sequence>MIQMQTELQVADNSGAKRVECIKVLGGSHRRYASIGDVIKVTVKEASPRGKAKKGSVYNAVVVRTAKGVRRKDGSKVRFDGNAAVLLNANGQPIGTRIFGPVTRELRTEKFMKIVSLAPEVL</sequence>
<evidence type="ECO:0000255" key="1">
    <source>
        <dbReference type="HAMAP-Rule" id="MF_01367"/>
    </source>
</evidence>
<evidence type="ECO:0000305" key="2"/>
<accession>A0Q4J3</accession>
<proteinExistence type="inferred from homology"/>
<name>RL14_FRATN</name>
<protein>
    <recommendedName>
        <fullName evidence="1">Large ribosomal subunit protein uL14</fullName>
    </recommendedName>
    <alternativeName>
        <fullName evidence="2">50S ribosomal protein L14</fullName>
    </alternativeName>
</protein>
<keyword id="KW-0687">Ribonucleoprotein</keyword>
<keyword id="KW-0689">Ribosomal protein</keyword>
<keyword id="KW-0694">RNA-binding</keyword>
<keyword id="KW-0699">rRNA-binding</keyword>
<dbReference type="EMBL" id="CP000439">
    <property type="protein sequence ID" value="ABK89158.1"/>
    <property type="molecule type" value="Genomic_DNA"/>
</dbReference>
<dbReference type="RefSeq" id="WP_003014346.1">
    <property type="nucleotide sequence ID" value="NZ_CP009633.1"/>
</dbReference>
<dbReference type="SMR" id="A0Q4J3"/>
<dbReference type="GeneID" id="75264251"/>
<dbReference type="KEGG" id="ftn:FTN_0249"/>
<dbReference type="KEGG" id="ftx:AW25_1793"/>
<dbReference type="BioCyc" id="FTUL401614:G1G75-260-MONOMER"/>
<dbReference type="Proteomes" id="UP000000762">
    <property type="component" value="Chromosome"/>
</dbReference>
<dbReference type="GO" id="GO:0022625">
    <property type="term" value="C:cytosolic large ribosomal subunit"/>
    <property type="evidence" value="ECO:0007669"/>
    <property type="project" value="TreeGrafter"/>
</dbReference>
<dbReference type="GO" id="GO:0070180">
    <property type="term" value="F:large ribosomal subunit rRNA binding"/>
    <property type="evidence" value="ECO:0007669"/>
    <property type="project" value="TreeGrafter"/>
</dbReference>
<dbReference type="GO" id="GO:0003735">
    <property type="term" value="F:structural constituent of ribosome"/>
    <property type="evidence" value="ECO:0007669"/>
    <property type="project" value="InterPro"/>
</dbReference>
<dbReference type="GO" id="GO:0006412">
    <property type="term" value="P:translation"/>
    <property type="evidence" value="ECO:0007669"/>
    <property type="project" value="UniProtKB-UniRule"/>
</dbReference>
<dbReference type="CDD" id="cd00337">
    <property type="entry name" value="Ribosomal_uL14"/>
    <property type="match status" value="1"/>
</dbReference>
<dbReference type="FunFam" id="2.40.150.20:FF:000001">
    <property type="entry name" value="50S ribosomal protein L14"/>
    <property type="match status" value="1"/>
</dbReference>
<dbReference type="Gene3D" id="2.40.150.20">
    <property type="entry name" value="Ribosomal protein L14"/>
    <property type="match status" value="1"/>
</dbReference>
<dbReference type="HAMAP" id="MF_01367">
    <property type="entry name" value="Ribosomal_uL14"/>
    <property type="match status" value="1"/>
</dbReference>
<dbReference type="InterPro" id="IPR000218">
    <property type="entry name" value="Ribosomal_uL14"/>
</dbReference>
<dbReference type="InterPro" id="IPR005745">
    <property type="entry name" value="Ribosomal_uL14_bac-type"/>
</dbReference>
<dbReference type="InterPro" id="IPR019972">
    <property type="entry name" value="Ribosomal_uL14_CS"/>
</dbReference>
<dbReference type="InterPro" id="IPR036853">
    <property type="entry name" value="Ribosomal_uL14_sf"/>
</dbReference>
<dbReference type="NCBIfam" id="TIGR01067">
    <property type="entry name" value="rplN_bact"/>
    <property type="match status" value="1"/>
</dbReference>
<dbReference type="PANTHER" id="PTHR11761">
    <property type="entry name" value="50S/60S RIBOSOMAL PROTEIN L14/L23"/>
    <property type="match status" value="1"/>
</dbReference>
<dbReference type="PANTHER" id="PTHR11761:SF3">
    <property type="entry name" value="LARGE RIBOSOMAL SUBUNIT PROTEIN UL14M"/>
    <property type="match status" value="1"/>
</dbReference>
<dbReference type="Pfam" id="PF00238">
    <property type="entry name" value="Ribosomal_L14"/>
    <property type="match status" value="1"/>
</dbReference>
<dbReference type="SMART" id="SM01374">
    <property type="entry name" value="Ribosomal_L14"/>
    <property type="match status" value="1"/>
</dbReference>
<dbReference type="SUPFAM" id="SSF50193">
    <property type="entry name" value="Ribosomal protein L14"/>
    <property type="match status" value="1"/>
</dbReference>
<dbReference type="PROSITE" id="PS00049">
    <property type="entry name" value="RIBOSOMAL_L14"/>
    <property type="match status" value="1"/>
</dbReference>